<organism>
    <name type="scientific">Granulibacter bethesdensis (strain ATCC BAA-1260 / CGDNIH1)</name>
    <dbReference type="NCBI Taxonomy" id="391165"/>
    <lineage>
        <taxon>Bacteria</taxon>
        <taxon>Pseudomonadati</taxon>
        <taxon>Pseudomonadota</taxon>
        <taxon>Alphaproteobacteria</taxon>
        <taxon>Acetobacterales</taxon>
        <taxon>Acetobacteraceae</taxon>
        <taxon>Granulibacter</taxon>
    </lineage>
</organism>
<name>PYRB_GRABC</name>
<comment type="function">
    <text evidence="1">Catalyzes the condensation of carbamoyl phosphate and aspartate to form carbamoyl aspartate and inorganic phosphate, the committed step in the de novo pyrimidine nucleotide biosynthesis pathway.</text>
</comment>
<comment type="catalytic activity">
    <reaction evidence="1">
        <text>carbamoyl phosphate + L-aspartate = N-carbamoyl-L-aspartate + phosphate + H(+)</text>
        <dbReference type="Rhea" id="RHEA:20013"/>
        <dbReference type="ChEBI" id="CHEBI:15378"/>
        <dbReference type="ChEBI" id="CHEBI:29991"/>
        <dbReference type="ChEBI" id="CHEBI:32814"/>
        <dbReference type="ChEBI" id="CHEBI:43474"/>
        <dbReference type="ChEBI" id="CHEBI:58228"/>
        <dbReference type="EC" id="2.1.3.2"/>
    </reaction>
</comment>
<comment type="pathway">
    <text evidence="1">Pyrimidine metabolism; UMP biosynthesis via de novo pathway; (S)-dihydroorotate from bicarbonate: step 2/3.</text>
</comment>
<comment type="subunit">
    <text evidence="1">Heterododecamer (2C3:3R2) of six catalytic PyrB chains organized as two trimers (C3), and six regulatory PyrI chains organized as three dimers (R2).</text>
</comment>
<comment type="similarity">
    <text evidence="1">Belongs to the aspartate/ornithine carbamoyltransferase superfamily. ATCase family.</text>
</comment>
<evidence type="ECO:0000255" key="1">
    <source>
        <dbReference type="HAMAP-Rule" id="MF_00001"/>
    </source>
</evidence>
<protein>
    <recommendedName>
        <fullName evidence="1">Aspartate carbamoyltransferase catalytic subunit</fullName>
        <ecNumber evidence="1">2.1.3.2</ecNumber>
    </recommendedName>
    <alternativeName>
        <fullName evidence="1">Aspartate transcarbamylase</fullName>
        <shortName evidence="1">ATCase</shortName>
    </alternativeName>
</protein>
<accession>Q0BTZ5</accession>
<reference key="1">
    <citation type="journal article" date="2007" name="J. Bacteriol.">
        <title>Genome sequence analysis of the emerging human pathogenic acetic acid bacterium Granulibacter bethesdensis.</title>
        <authorList>
            <person name="Greenberg D.E."/>
            <person name="Porcella S.F."/>
            <person name="Zelazny A.M."/>
            <person name="Virtaneva K."/>
            <person name="Sturdevant D.E."/>
            <person name="Kupko J.J. III"/>
            <person name="Barbian K.D."/>
            <person name="Babar A."/>
            <person name="Dorward D.W."/>
            <person name="Holland S.M."/>
        </authorList>
    </citation>
    <scope>NUCLEOTIDE SEQUENCE [LARGE SCALE GENOMIC DNA]</scope>
    <source>
        <strain>ATCC BAA-1260 / CGDNIH1</strain>
    </source>
</reference>
<feature type="chain" id="PRO_0000321105" description="Aspartate carbamoyltransferase catalytic subunit">
    <location>
        <begin position="1"/>
        <end position="316"/>
    </location>
</feature>
<feature type="binding site" evidence="1">
    <location>
        <position position="58"/>
    </location>
    <ligand>
        <name>carbamoyl phosphate</name>
        <dbReference type="ChEBI" id="CHEBI:58228"/>
    </ligand>
</feature>
<feature type="binding site" evidence="1">
    <location>
        <position position="59"/>
    </location>
    <ligand>
        <name>carbamoyl phosphate</name>
        <dbReference type="ChEBI" id="CHEBI:58228"/>
    </ligand>
</feature>
<feature type="binding site" evidence="1">
    <location>
        <position position="86"/>
    </location>
    <ligand>
        <name>L-aspartate</name>
        <dbReference type="ChEBI" id="CHEBI:29991"/>
    </ligand>
</feature>
<feature type="binding site" evidence="1">
    <location>
        <position position="108"/>
    </location>
    <ligand>
        <name>carbamoyl phosphate</name>
        <dbReference type="ChEBI" id="CHEBI:58228"/>
    </ligand>
</feature>
<feature type="binding site" evidence="1">
    <location>
        <position position="136"/>
    </location>
    <ligand>
        <name>carbamoyl phosphate</name>
        <dbReference type="ChEBI" id="CHEBI:58228"/>
    </ligand>
</feature>
<feature type="binding site" evidence="1">
    <location>
        <position position="139"/>
    </location>
    <ligand>
        <name>carbamoyl phosphate</name>
        <dbReference type="ChEBI" id="CHEBI:58228"/>
    </ligand>
</feature>
<feature type="binding site" evidence="1">
    <location>
        <position position="169"/>
    </location>
    <ligand>
        <name>L-aspartate</name>
        <dbReference type="ChEBI" id="CHEBI:29991"/>
    </ligand>
</feature>
<feature type="binding site" evidence="1">
    <location>
        <position position="223"/>
    </location>
    <ligand>
        <name>L-aspartate</name>
        <dbReference type="ChEBI" id="CHEBI:29991"/>
    </ligand>
</feature>
<feature type="binding site" evidence="1">
    <location>
        <position position="264"/>
    </location>
    <ligand>
        <name>carbamoyl phosphate</name>
        <dbReference type="ChEBI" id="CHEBI:58228"/>
    </ligand>
</feature>
<feature type="binding site" evidence="1">
    <location>
        <position position="265"/>
    </location>
    <ligand>
        <name>carbamoyl phosphate</name>
        <dbReference type="ChEBI" id="CHEBI:58228"/>
    </ligand>
</feature>
<proteinExistence type="inferred from homology"/>
<keyword id="KW-0665">Pyrimidine biosynthesis</keyword>
<keyword id="KW-1185">Reference proteome</keyword>
<keyword id="KW-0808">Transferase</keyword>
<gene>
    <name evidence="1" type="primary">pyrB</name>
    <name type="ordered locus">GbCGDNIH1_0809</name>
</gene>
<sequence>MDFVRPHLLAIEGLHPPEIHALLDLAESYALLNRSGKTQRDLLRGRTLINLFFEDSTRTRTSFELAGKRLGADVINMSVSTSSVNKGETLLDTASTLNAMHCDLLVVRHSQSGAPNLLAQKVDAAVINAGDGTHEHPTQALLDALTIRRHKGRLEGLTVAICGDVLHSRVARSNIYLLASLGSQVRLIGPPTLIPGAADRLGVEVFHDMDRGLDGADVVMMLRLQRERMKSGLVPSEREYFRFFGLNEARLAKAKPDAIIMHPGPMNRGVEIESRVADDPVRSVIKEQVEMGVAVRMAVLDALARQRSRLPSSRPV</sequence>
<dbReference type="EC" id="2.1.3.2" evidence="1"/>
<dbReference type="EMBL" id="CP000394">
    <property type="protein sequence ID" value="ABI61707.1"/>
    <property type="molecule type" value="Genomic_DNA"/>
</dbReference>
<dbReference type="RefSeq" id="WP_011631516.1">
    <property type="nucleotide sequence ID" value="NC_008343.2"/>
</dbReference>
<dbReference type="SMR" id="Q0BTZ5"/>
<dbReference type="STRING" id="391165.GbCGDNIH1_0809"/>
<dbReference type="KEGG" id="gbe:GbCGDNIH1_0809"/>
<dbReference type="eggNOG" id="COG0540">
    <property type="taxonomic scope" value="Bacteria"/>
</dbReference>
<dbReference type="HOGENOM" id="CLU_043846_2_0_5"/>
<dbReference type="OrthoDB" id="9774690at2"/>
<dbReference type="UniPathway" id="UPA00070">
    <property type="reaction ID" value="UER00116"/>
</dbReference>
<dbReference type="Proteomes" id="UP000001963">
    <property type="component" value="Chromosome"/>
</dbReference>
<dbReference type="GO" id="GO:0005829">
    <property type="term" value="C:cytosol"/>
    <property type="evidence" value="ECO:0007669"/>
    <property type="project" value="TreeGrafter"/>
</dbReference>
<dbReference type="GO" id="GO:0016597">
    <property type="term" value="F:amino acid binding"/>
    <property type="evidence" value="ECO:0007669"/>
    <property type="project" value="InterPro"/>
</dbReference>
<dbReference type="GO" id="GO:0004070">
    <property type="term" value="F:aspartate carbamoyltransferase activity"/>
    <property type="evidence" value="ECO:0007669"/>
    <property type="project" value="UniProtKB-UniRule"/>
</dbReference>
<dbReference type="GO" id="GO:0006207">
    <property type="term" value="P:'de novo' pyrimidine nucleobase biosynthetic process"/>
    <property type="evidence" value="ECO:0007669"/>
    <property type="project" value="InterPro"/>
</dbReference>
<dbReference type="GO" id="GO:0044205">
    <property type="term" value="P:'de novo' UMP biosynthetic process"/>
    <property type="evidence" value="ECO:0007669"/>
    <property type="project" value="UniProtKB-UniRule"/>
</dbReference>
<dbReference type="GO" id="GO:0006520">
    <property type="term" value="P:amino acid metabolic process"/>
    <property type="evidence" value="ECO:0007669"/>
    <property type="project" value="InterPro"/>
</dbReference>
<dbReference type="FunFam" id="3.40.50.1370:FF:000007">
    <property type="entry name" value="Aspartate carbamoyltransferase"/>
    <property type="match status" value="1"/>
</dbReference>
<dbReference type="Gene3D" id="3.40.50.1370">
    <property type="entry name" value="Aspartate/ornithine carbamoyltransferase"/>
    <property type="match status" value="2"/>
</dbReference>
<dbReference type="HAMAP" id="MF_00001">
    <property type="entry name" value="Asp_carb_tr"/>
    <property type="match status" value="1"/>
</dbReference>
<dbReference type="InterPro" id="IPR006132">
    <property type="entry name" value="Asp/Orn_carbamoyltranf_P-bd"/>
</dbReference>
<dbReference type="InterPro" id="IPR006130">
    <property type="entry name" value="Asp/Orn_carbamoylTrfase"/>
</dbReference>
<dbReference type="InterPro" id="IPR036901">
    <property type="entry name" value="Asp/Orn_carbamoylTrfase_sf"/>
</dbReference>
<dbReference type="InterPro" id="IPR002082">
    <property type="entry name" value="Asp_carbamoyltransf"/>
</dbReference>
<dbReference type="InterPro" id="IPR006131">
    <property type="entry name" value="Asp_carbamoyltransf_Asp/Orn-bd"/>
</dbReference>
<dbReference type="NCBIfam" id="TIGR00670">
    <property type="entry name" value="asp_carb_tr"/>
    <property type="match status" value="1"/>
</dbReference>
<dbReference type="NCBIfam" id="NF002032">
    <property type="entry name" value="PRK00856.1"/>
    <property type="match status" value="1"/>
</dbReference>
<dbReference type="PANTHER" id="PTHR45753:SF6">
    <property type="entry name" value="ASPARTATE CARBAMOYLTRANSFERASE"/>
    <property type="match status" value="1"/>
</dbReference>
<dbReference type="PANTHER" id="PTHR45753">
    <property type="entry name" value="ORNITHINE CARBAMOYLTRANSFERASE, MITOCHONDRIAL"/>
    <property type="match status" value="1"/>
</dbReference>
<dbReference type="Pfam" id="PF00185">
    <property type="entry name" value="OTCace"/>
    <property type="match status" value="1"/>
</dbReference>
<dbReference type="Pfam" id="PF02729">
    <property type="entry name" value="OTCace_N"/>
    <property type="match status" value="1"/>
</dbReference>
<dbReference type="PRINTS" id="PR00100">
    <property type="entry name" value="AOTCASE"/>
</dbReference>
<dbReference type="PRINTS" id="PR00101">
    <property type="entry name" value="ATCASE"/>
</dbReference>
<dbReference type="SUPFAM" id="SSF53671">
    <property type="entry name" value="Aspartate/ornithine carbamoyltransferase"/>
    <property type="match status" value="1"/>
</dbReference>
<dbReference type="PROSITE" id="PS00097">
    <property type="entry name" value="CARBAMOYLTRANSFERASE"/>
    <property type="match status" value="1"/>
</dbReference>